<protein>
    <recommendedName>
        <fullName>Uncharacterized protein HI_0449</fullName>
    </recommendedName>
</protein>
<organism>
    <name type="scientific">Haemophilus influenzae (strain ATCC 51907 / DSM 11121 / KW20 / Rd)</name>
    <dbReference type="NCBI Taxonomy" id="71421"/>
    <lineage>
        <taxon>Bacteria</taxon>
        <taxon>Pseudomonadati</taxon>
        <taxon>Pseudomonadota</taxon>
        <taxon>Gammaproteobacteria</taxon>
        <taxon>Pasteurellales</taxon>
        <taxon>Pasteurellaceae</taxon>
        <taxon>Haemophilus</taxon>
    </lineage>
</organism>
<sequence>MTMFKKISVLFFTLILAGCSSWSSVTNYIPFMGNDKKVIDLDKDKIDQKSYAAAYEATVATYKGRVNENFFVDNFASGANDWYLGRILVPVKQIQDKLYTGGHDSDVYAYYSGVLHAEALQANLKRLSANCWEKVDSQSMAQGIYDAMRDLQKGEARGENDEYIVQGSEALLKACTSK</sequence>
<gene>
    <name type="ordered locus">HI_0449</name>
</gene>
<dbReference type="EMBL" id="L42023">
    <property type="protein sequence ID" value="AAC22120.1"/>
    <property type="molecule type" value="Genomic_DNA"/>
</dbReference>
<dbReference type="PIR" id="F64007">
    <property type="entry name" value="F64007"/>
</dbReference>
<dbReference type="RefSeq" id="NP_438610.1">
    <property type="nucleotide sequence ID" value="NC_000907.1"/>
</dbReference>
<dbReference type="STRING" id="71421.HI_0449"/>
<dbReference type="EnsemblBacteria" id="AAC22120">
    <property type="protein sequence ID" value="AAC22120"/>
    <property type="gene ID" value="HI_0449"/>
</dbReference>
<dbReference type="KEGG" id="hin:HI_0449"/>
<dbReference type="PATRIC" id="fig|71421.8.peg.469"/>
<dbReference type="eggNOG" id="ENOG5031JY1">
    <property type="taxonomic scope" value="Bacteria"/>
</dbReference>
<dbReference type="HOGENOM" id="CLU_124278_0_0_6"/>
<dbReference type="OrthoDB" id="5686057at2"/>
<dbReference type="BioCyc" id="HINF71421:G1GJ1-465-MONOMER"/>
<dbReference type="Proteomes" id="UP000000579">
    <property type="component" value="Chromosome"/>
</dbReference>
<dbReference type="PROSITE" id="PS51257">
    <property type="entry name" value="PROKAR_LIPOPROTEIN"/>
    <property type="match status" value="1"/>
</dbReference>
<keyword id="KW-1185">Reference proteome</keyword>
<keyword id="KW-0732">Signal</keyword>
<accession>P43997</accession>
<name>Y449_HAEIN</name>
<evidence type="ECO:0000255" key="1">
    <source>
        <dbReference type="PROSITE-ProRule" id="PRU00303"/>
    </source>
</evidence>
<proteinExistence type="inferred from homology"/>
<reference key="1">
    <citation type="journal article" date="1995" name="Science">
        <title>Whole-genome random sequencing and assembly of Haemophilus influenzae Rd.</title>
        <authorList>
            <person name="Fleischmann R.D."/>
            <person name="Adams M.D."/>
            <person name="White O."/>
            <person name="Clayton R.A."/>
            <person name="Kirkness E.F."/>
            <person name="Kerlavage A.R."/>
            <person name="Bult C.J."/>
            <person name="Tomb J.-F."/>
            <person name="Dougherty B.A."/>
            <person name="Merrick J.M."/>
            <person name="McKenney K."/>
            <person name="Sutton G.G."/>
            <person name="FitzHugh W."/>
            <person name="Fields C.A."/>
            <person name="Gocayne J.D."/>
            <person name="Scott J.D."/>
            <person name="Shirley R."/>
            <person name="Liu L.-I."/>
            <person name="Glodek A."/>
            <person name="Kelley J.M."/>
            <person name="Weidman J.F."/>
            <person name="Phillips C.A."/>
            <person name="Spriggs T."/>
            <person name="Hedblom E."/>
            <person name="Cotton M.D."/>
            <person name="Utterback T.R."/>
            <person name="Hanna M.C."/>
            <person name="Nguyen D.T."/>
            <person name="Saudek D.M."/>
            <person name="Brandon R.C."/>
            <person name="Fine L.D."/>
            <person name="Fritchman J.L."/>
            <person name="Fuhrmann J.L."/>
            <person name="Geoghagen N.S.M."/>
            <person name="Gnehm C.L."/>
            <person name="McDonald L.A."/>
            <person name="Small K.V."/>
            <person name="Fraser C.M."/>
            <person name="Smith H.O."/>
            <person name="Venter J.C."/>
        </authorList>
    </citation>
    <scope>NUCLEOTIDE SEQUENCE [LARGE SCALE GENOMIC DNA]</scope>
    <source>
        <strain>ATCC 51907 / DSM 11121 / KW20 / Rd</strain>
    </source>
</reference>
<feature type="signal peptide" evidence="1">
    <location>
        <begin position="1"/>
        <end position="23"/>
    </location>
</feature>
<feature type="chain" id="PRO_0000013958" description="Uncharacterized protein HI_0449">
    <location>
        <begin position="24"/>
        <end position="178"/>
    </location>
</feature>